<dbReference type="EMBL" id="AF421879">
    <property type="protein sequence ID" value="AAL32445.1"/>
    <property type="molecule type" value="mRNA"/>
</dbReference>
<dbReference type="EMBL" id="AF321817">
    <property type="protein sequence ID" value="AAL37221.1"/>
    <property type="molecule type" value="mRNA"/>
</dbReference>
<dbReference type="EMBL" id="AK011578">
    <property type="status" value="NOT_ANNOTATED_CDS"/>
    <property type="molecule type" value="mRNA"/>
</dbReference>
<dbReference type="EMBL" id="AK012057">
    <property type="protein sequence ID" value="BAE43228.1"/>
    <property type="molecule type" value="mRNA"/>
</dbReference>
<dbReference type="EMBL" id="AK075840">
    <property type="protein sequence ID" value="BAC35998.1"/>
    <property type="molecule type" value="mRNA"/>
</dbReference>
<dbReference type="EMBL" id="BC115636">
    <property type="protein sequence ID" value="AAI15637.1"/>
    <property type="molecule type" value="mRNA"/>
</dbReference>
<dbReference type="EMBL" id="AJ344106">
    <property type="protein sequence ID" value="CAC51439.1"/>
    <property type="molecule type" value="mRNA"/>
</dbReference>
<dbReference type="CCDS" id="CCDS27205.1"/>
<dbReference type="RefSeq" id="NP_082504.1">
    <property type="nucleotide sequence ID" value="NM_028228.4"/>
</dbReference>
<dbReference type="BioGRID" id="215357">
    <property type="interactions" value="34"/>
</dbReference>
<dbReference type="FunCoup" id="Q9CZX5">
    <property type="interactions" value="2345"/>
</dbReference>
<dbReference type="STRING" id="10090.ENSMUSP00000022528"/>
<dbReference type="iPTMnet" id="Q9CZX5"/>
<dbReference type="PhosphoSitePlus" id="Q9CZX5"/>
<dbReference type="jPOST" id="Q9CZX5"/>
<dbReference type="PaxDb" id="10090-ENSMUSP00000022528"/>
<dbReference type="PeptideAtlas" id="Q9CZX5"/>
<dbReference type="ProteomicsDB" id="289577"/>
<dbReference type="Pumba" id="Q9CZX5"/>
<dbReference type="Antibodypedia" id="54507">
    <property type="antibodies" value="238 antibodies from 30 providers"/>
</dbReference>
<dbReference type="DNASU" id="72400"/>
<dbReference type="Ensembl" id="ENSMUST00000022528.6">
    <property type="protein sequence ID" value="ENSMUSP00000022528.5"/>
    <property type="gene ID" value="ENSMUSG00000021958.6"/>
</dbReference>
<dbReference type="GeneID" id="72400"/>
<dbReference type="KEGG" id="mmu:72400"/>
<dbReference type="UCSC" id="uc007uhx.2">
    <property type="organism name" value="mouse"/>
</dbReference>
<dbReference type="AGR" id="MGI:1919650"/>
<dbReference type="CTD" id="54984"/>
<dbReference type="MGI" id="MGI:1919650">
    <property type="gene designation" value="Pinx1"/>
</dbReference>
<dbReference type="VEuPathDB" id="HostDB:ENSMUSG00000021958"/>
<dbReference type="eggNOG" id="KOG2809">
    <property type="taxonomic scope" value="Eukaryota"/>
</dbReference>
<dbReference type="GeneTree" id="ENSGT00450000040279"/>
<dbReference type="HOGENOM" id="CLU_047471_0_0_1"/>
<dbReference type="InParanoid" id="Q9CZX5"/>
<dbReference type="OMA" id="PCWDQSS"/>
<dbReference type="OrthoDB" id="29523at2759"/>
<dbReference type="PhylomeDB" id="Q9CZX5"/>
<dbReference type="TreeFam" id="TF321918"/>
<dbReference type="BioGRID-ORCS" id="72400">
    <property type="hits" value="17 hits in 82 CRISPR screens"/>
</dbReference>
<dbReference type="ChiTaRS" id="Pinx1">
    <property type="organism name" value="mouse"/>
</dbReference>
<dbReference type="PRO" id="PR:Q9CZX5"/>
<dbReference type="Proteomes" id="UP000000589">
    <property type="component" value="Chromosome 14"/>
</dbReference>
<dbReference type="RNAct" id="Q9CZX5">
    <property type="molecule type" value="protein"/>
</dbReference>
<dbReference type="Bgee" id="ENSMUSG00000021958">
    <property type="expression patterns" value="Expressed in undifferentiated genital tubercle and 248 other cell types or tissues"/>
</dbReference>
<dbReference type="GO" id="GO:0000781">
    <property type="term" value="C:chromosome, telomeric region"/>
    <property type="evidence" value="ECO:0000266"/>
    <property type="project" value="MGI"/>
</dbReference>
<dbReference type="GO" id="GO:0000776">
    <property type="term" value="C:kinetochore"/>
    <property type="evidence" value="ECO:0007669"/>
    <property type="project" value="UniProtKB-KW"/>
</dbReference>
<dbReference type="GO" id="GO:0005739">
    <property type="term" value="C:mitochondrion"/>
    <property type="evidence" value="ECO:0007669"/>
    <property type="project" value="Ensembl"/>
</dbReference>
<dbReference type="GO" id="GO:0000228">
    <property type="term" value="C:nuclear chromosome"/>
    <property type="evidence" value="ECO:0007669"/>
    <property type="project" value="Ensembl"/>
</dbReference>
<dbReference type="GO" id="GO:0005730">
    <property type="term" value="C:nucleolus"/>
    <property type="evidence" value="ECO:0000266"/>
    <property type="project" value="MGI"/>
</dbReference>
<dbReference type="GO" id="GO:0005654">
    <property type="term" value="C:nucleoplasm"/>
    <property type="evidence" value="ECO:0007669"/>
    <property type="project" value="Ensembl"/>
</dbReference>
<dbReference type="GO" id="GO:0005819">
    <property type="term" value="C:spindle"/>
    <property type="evidence" value="ECO:0007669"/>
    <property type="project" value="Ensembl"/>
</dbReference>
<dbReference type="GO" id="GO:0044877">
    <property type="term" value="F:protein-containing complex binding"/>
    <property type="evidence" value="ECO:0007669"/>
    <property type="project" value="Ensembl"/>
</dbReference>
<dbReference type="GO" id="GO:0010521">
    <property type="term" value="F:telomerase inhibitor activity"/>
    <property type="evidence" value="ECO:0007669"/>
    <property type="project" value="Ensembl"/>
</dbReference>
<dbReference type="GO" id="GO:0070034">
    <property type="term" value="F:telomerase RNA binding"/>
    <property type="evidence" value="ECO:0007669"/>
    <property type="project" value="Ensembl"/>
</dbReference>
<dbReference type="GO" id="GO:0007080">
    <property type="term" value="P:mitotic metaphase chromosome alignment"/>
    <property type="evidence" value="ECO:0007669"/>
    <property type="project" value="Ensembl"/>
</dbReference>
<dbReference type="GO" id="GO:0010972">
    <property type="term" value="P:negative regulation of G2/M transition of mitotic cell cycle"/>
    <property type="evidence" value="ECO:0007669"/>
    <property type="project" value="Ensembl"/>
</dbReference>
<dbReference type="GO" id="GO:0031397">
    <property type="term" value="P:negative regulation of protein ubiquitination"/>
    <property type="evidence" value="ECO:0007669"/>
    <property type="project" value="Ensembl"/>
</dbReference>
<dbReference type="GO" id="GO:0032211">
    <property type="term" value="P:negative regulation of telomere maintenance via telomerase"/>
    <property type="evidence" value="ECO:0007669"/>
    <property type="project" value="Ensembl"/>
</dbReference>
<dbReference type="GO" id="GO:1904751">
    <property type="term" value="P:positive regulation of protein localization to nucleolus"/>
    <property type="evidence" value="ECO:0007669"/>
    <property type="project" value="Ensembl"/>
</dbReference>
<dbReference type="GO" id="GO:0070198">
    <property type="term" value="P:protein localization to chromosome, telomeric region"/>
    <property type="evidence" value="ECO:0007669"/>
    <property type="project" value="Ensembl"/>
</dbReference>
<dbReference type="GO" id="GO:1902570">
    <property type="term" value="P:protein localization to nucleolus"/>
    <property type="evidence" value="ECO:0007669"/>
    <property type="project" value="Ensembl"/>
</dbReference>
<dbReference type="GO" id="GO:0031647">
    <property type="term" value="P:regulation of protein stability"/>
    <property type="evidence" value="ECO:0007669"/>
    <property type="project" value="Ensembl"/>
</dbReference>
<dbReference type="GO" id="GO:0007004">
    <property type="term" value="P:telomere maintenance via telomerase"/>
    <property type="evidence" value="ECO:0000266"/>
    <property type="project" value="MGI"/>
</dbReference>
<dbReference type="InterPro" id="IPR000467">
    <property type="entry name" value="G_patch_dom"/>
</dbReference>
<dbReference type="InterPro" id="IPR050656">
    <property type="entry name" value="PINX1"/>
</dbReference>
<dbReference type="PANTHER" id="PTHR23149">
    <property type="entry name" value="G PATCH DOMAIN CONTAINING PROTEIN"/>
    <property type="match status" value="1"/>
</dbReference>
<dbReference type="PANTHER" id="PTHR23149:SF27">
    <property type="entry name" value="PIN2_TERF1-INTERACTING TELOMERASE INHIBITOR 1"/>
    <property type="match status" value="1"/>
</dbReference>
<dbReference type="Pfam" id="PF01585">
    <property type="entry name" value="G-patch"/>
    <property type="match status" value="1"/>
</dbReference>
<dbReference type="SMART" id="SM00443">
    <property type="entry name" value="G_patch"/>
    <property type="match status" value="1"/>
</dbReference>
<dbReference type="PROSITE" id="PS50174">
    <property type="entry name" value="G_PATCH"/>
    <property type="match status" value="1"/>
</dbReference>
<gene>
    <name type="primary">Pinx1</name>
    <name type="synonym">Lpts</name>
</gene>
<protein>
    <recommendedName>
        <fullName>PIN2/TERF1-interacting telomerase inhibitor 1</fullName>
    </recommendedName>
    <alternativeName>
        <fullName>67-11-3 protein</fullName>
    </alternativeName>
    <alternativeName>
        <fullName>LPTS1</fullName>
    </alternativeName>
    <alternativeName>
        <fullName>Liver-related putative tumor suppressor</fullName>
    </alternativeName>
    <alternativeName>
        <fullName>Pin2-interacting protein X1</fullName>
    </alternativeName>
    <alternativeName>
        <fullName>TRF1-interacting protein 1</fullName>
    </alternativeName>
</protein>
<evidence type="ECO:0000250" key="1"/>
<evidence type="ECO:0000255" key="2">
    <source>
        <dbReference type="PROSITE-ProRule" id="PRU00092"/>
    </source>
</evidence>
<evidence type="ECO:0000256" key="3">
    <source>
        <dbReference type="SAM" id="MobiDB-lite"/>
    </source>
</evidence>
<evidence type="ECO:0000305" key="4"/>
<evidence type="ECO:0007744" key="5">
    <source>
    </source>
</evidence>
<sequence>MSMLAERRRKQKWTVDPRNTAWSNDDSKFGQKMLEKMGWSKGKGLGAQEQGATEHIKVKVKNNHLGLGATNNNEDNWIAHQDDFNQLLAALNTCHGQETADSSDKKEKKSFSLEEKSKISKNRVHYMKFTKGKDLSSRSETDLDCIFGKRRNKKLAQDGCSNSSADEVNTSLTTTTTTTSAFTIQEYFAKRMAQLKNKPQASAPGSDLSETPVERKKGKKKNKEAADTDVENSPQHKAKRHKKKKRVEAERGPVAKKRDRAELQPGGPSEDECSDASVEAAEDCVQTPDIQDDVPKPKKRKAKKKLQRPEGVEIDATLDRAPVKKKKKKVSR</sequence>
<name>PINX1_MOUSE</name>
<proteinExistence type="evidence at protein level"/>
<accession>Q9CZX5</accession>
<accession>Q14BS4</accession>
<accession>Q3V450</accession>
<accession>Q8C6E5</accession>
<accession>Q91WZ9</accession>
<accession>Q9D0C2</accession>
<organism>
    <name type="scientific">Mus musculus</name>
    <name type="common">Mouse</name>
    <dbReference type="NCBI Taxonomy" id="10090"/>
    <lineage>
        <taxon>Eukaryota</taxon>
        <taxon>Metazoa</taxon>
        <taxon>Chordata</taxon>
        <taxon>Craniata</taxon>
        <taxon>Vertebrata</taxon>
        <taxon>Euteleostomi</taxon>
        <taxon>Mammalia</taxon>
        <taxon>Eutheria</taxon>
        <taxon>Euarchontoglires</taxon>
        <taxon>Glires</taxon>
        <taxon>Rodentia</taxon>
        <taxon>Myomorpha</taxon>
        <taxon>Muroidea</taxon>
        <taxon>Muridae</taxon>
        <taxon>Murinae</taxon>
        <taxon>Mus</taxon>
        <taxon>Mus</taxon>
    </lineage>
</organism>
<feature type="chain" id="PRO_0000058444" description="PIN2/TERF1-interacting telomerase inhibitor 1">
    <location>
        <begin position="1"/>
        <end position="332"/>
    </location>
</feature>
<feature type="domain" description="G-patch" evidence="2">
    <location>
        <begin position="26"/>
        <end position="72"/>
    </location>
</feature>
<feature type="region of interest" description="Disordered" evidence="3">
    <location>
        <begin position="1"/>
        <end position="27"/>
    </location>
</feature>
<feature type="region of interest" description="Disordered" evidence="3">
    <location>
        <begin position="196"/>
        <end position="332"/>
    </location>
</feature>
<feature type="region of interest" description="Telomerase inhibitory domain (TID)">
    <location>
        <begin position="254"/>
        <end position="328"/>
    </location>
</feature>
<feature type="short sequence motif" description="TBM">
    <location>
        <begin position="291"/>
        <end position="301"/>
    </location>
</feature>
<feature type="compositionally biased region" description="Basic residues" evidence="3">
    <location>
        <begin position="236"/>
        <end position="246"/>
    </location>
</feature>
<feature type="compositionally biased region" description="Basic residues" evidence="3">
    <location>
        <begin position="297"/>
        <end position="306"/>
    </location>
</feature>
<feature type="compositionally biased region" description="Basic and acidic residues" evidence="3">
    <location>
        <begin position="307"/>
        <end position="322"/>
    </location>
</feature>
<feature type="compositionally biased region" description="Basic residues" evidence="3">
    <location>
        <begin position="323"/>
        <end position="332"/>
    </location>
</feature>
<feature type="modified residue" description="Phosphoserine" evidence="5">
    <location>
        <position position="233"/>
    </location>
</feature>
<feature type="modified residue" description="Phosphoserine" evidence="5">
    <location>
        <position position="269"/>
    </location>
</feature>
<feature type="modified residue" description="Phosphoserine" evidence="5">
    <location>
        <position position="274"/>
    </location>
</feature>
<feature type="modified residue" description="Phosphoserine" evidence="5">
    <location>
        <position position="277"/>
    </location>
</feature>
<feature type="sequence conflict" description="In Ref. 3; BAC35998." evidence="4" ref="3">
    <original>S</original>
    <variation>A</variation>
    <location>
        <position position="40"/>
    </location>
</feature>
<feature type="sequence conflict" description="In Ref. 3; BAE43228." evidence="4" ref="3">
    <original>ETPV</original>
    <variation>HAPC</variation>
    <location>
        <begin position="210"/>
        <end position="213"/>
    </location>
</feature>
<reference key="1">
    <citation type="journal article" date="2001" name="Cell">
        <title>The Pin2/TRF1-interacting protein PinX1 is a potent telomerase inhibitor.</title>
        <authorList>
            <person name="Zhou X.Z."/>
            <person name="Lu K.P."/>
        </authorList>
    </citation>
    <scope>NUCLEOTIDE SEQUENCE [MRNA]</scope>
</reference>
<reference key="2">
    <citation type="submission" date="2000-11" db="EMBL/GenBank/DDBJ databases">
        <title>The expression of mouse LPTS1, a homolog of human tumor suppressor LPTS, in mouse liver.</title>
        <authorList>
            <person name="Liao C."/>
            <person name="Zhao M."/>
            <person name="Li T."/>
        </authorList>
    </citation>
    <scope>NUCLEOTIDE SEQUENCE [MRNA]</scope>
    <source>
        <strain>ICR</strain>
    </source>
</reference>
<reference key="3">
    <citation type="journal article" date="2005" name="Science">
        <title>The transcriptional landscape of the mammalian genome.</title>
        <authorList>
            <person name="Carninci P."/>
            <person name="Kasukawa T."/>
            <person name="Katayama S."/>
            <person name="Gough J."/>
            <person name="Frith M.C."/>
            <person name="Maeda N."/>
            <person name="Oyama R."/>
            <person name="Ravasi T."/>
            <person name="Lenhard B."/>
            <person name="Wells C."/>
            <person name="Kodzius R."/>
            <person name="Shimokawa K."/>
            <person name="Bajic V.B."/>
            <person name="Brenner S.E."/>
            <person name="Batalov S."/>
            <person name="Forrest A.R."/>
            <person name="Zavolan M."/>
            <person name="Davis M.J."/>
            <person name="Wilming L.G."/>
            <person name="Aidinis V."/>
            <person name="Allen J.E."/>
            <person name="Ambesi-Impiombato A."/>
            <person name="Apweiler R."/>
            <person name="Aturaliya R.N."/>
            <person name="Bailey T.L."/>
            <person name="Bansal M."/>
            <person name="Baxter L."/>
            <person name="Beisel K.W."/>
            <person name="Bersano T."/>
            <person name="Bono H."/>
            <person name="Chalk A.M."/>
            <person name="Chiu K.P."/>
            <person name="Choudhary V."/>
            <person name="Christoffels A."/>
            <person name="Clutterbuck D.R."/>
            <person name="Crowe M.L."/>
            <person name="Dalla E."/>
            <person name="Dalrymple B.P."/>
            <person name="de Bono B."/>
            <person name="Della Gatta G."/>
            <person name="di Bernardo D."/>
            <person name="Down T."/>
            <person name="Engstrom P."/>
            <person name="Fagiolini M."/>
            <person name="Faulkner G."/>
            <person name="Fletcher C.F."/>
            <person name="Fukushima T."/>
            <person name="Furuno M."/>
            <person name="Futaki S."/>
            <person name="Gariboldi M."/>
            <person name="Georgii-Hemming P."/>
            <person name="Gingeras T.R."/>
            <person name="Gojobori T."/>
            <person name="Green R.E."/>
            <person name="Gustincich S."/>
            <person name="Harbers M."/>
            <person name="Hayashi Y."/>
            <person name="Hensch T.K."/>
            <person name="Hirokawa N."/>
            <person name="Hill D."/>
            <person name="Huminiecki L."/>
            <person name="Iacono M."/>
            <person name="Ikeo K."/>
            <person name="Iwama A."/>
            <person name="Ishikawa T."/>
            <person name="Jakt M."/>
            <person name="Kanapin A."/>
            <person name="Katoh M."/>
            <person name="Kawasawa Y."/>
            <person name="Kelso J."/>
            <person name="Kitamura H."/>
            <person name="Kitano H."/>
            <person name="Kollias G."/>
            <person name="Krishnan S.P."/>
            <person name="Kruger A."/>
            <person name="Kummerfeld S.K."/>
            <person name="Kurochkin I.V."/>
            <person name="Lareau L.F."/>
            <person name="Lazarevic D."/>
            <person name="Lipovich L."/>
            <person name="Liu J."/>
            <person name="Liuni S."/>
            <person name="McWilliam S."/>
            <person name="Madan Babu M."/>
            <person name="Madera M."/>
            <person name="Marchionni L."/>
            <person name="Matsuda H."/>
            <person name="Matsuzawa S."/>
            <person name="Miki H."/>
            <person name="Mignone F."/>
            <person name="Miyake S."/>
            <person name="Morris K."/>
            <person name="Mottagui-Tabar S."/>
            <person name="Mulder N."/>
            <person name="Nakano N."/>
            <person name="Nakauchi H."/>
            <person name="Ng P."/>
            <person name="Nilsson R."/>
            <person name="Nishiguchi S."/>
            <person name="Nishikawa S."/>
            <person name="Nori F."/>
            <person name="Ohara O."/>
            <person name="Okazaki Y."/>
            <person name="Orlando V."/>
            <person name="Pang K.C."/>
            <person name="Pavan W.J."/>
            <person name="Pavesi G."/>
            <person name="Pesole G."/>
            <person name="Petrovsky N."/>
            <person name="Piazza S."/>
            <person name="Reed J."/>
            <person name="Reid J.F."/>
            <person name="Ring B.Z."/>
            <person name="Ringwald M."/>
            <person name="Rost B."/>
            <person name="Ruan Y."/>
            <person name="Salzberg S.L."/>
            <person name="Sandelin A."/>
            <person name="Schneider C."/>
            <person name="Schoenbach C."/>
            <person name="Sekiguchi K."/>
            <person name="Semple C.A."/>
            <person name="Seno S."/>
            <person name="Sessa L."/>
            <person name="Sheng Y."/>
            <person name="Shibata Y."/>
            <person name="Shimada H."/>
            <person name="Shimada K."/>
            <person name="Silva D."/>
            <person name="Sinclair B."/>
            <person name="Sperling S."/>
            <person name="Stupka E."/>
            <person name="Sugiura K."/>
            <person name="Sultana R."/>
            <person name="Takenaka Y."/>
            <person name="Taki K."/>
            <person name="Tammoja K."/>
            <person name="Tan S.L."/>
            <person name="Tang S."/>
            <person name="Taylor M.S."/>
            <person name="Tegner J."/>
            <person name="Teichmann S.A."/>
            <person name="Ueda H.R."/>
            <person name="van Nimwegen E."/>
            <person name="Verardo R."/>
            <person name="Wei C.L."/>
            <person name="Yagi K."/>
            <person name="Yamanishi H."/>
            <person name="Zabarovsky E."/>
            <person name="Zhu S."/>
            <person name="Zimmer A."/>
            <person name="Hide W."/>
            <person name="Bult C."/>
            <person name="Grimmond S.M."/>
            <person name="Teasdale R.D."/>
            <person name="Liu E.T."/>
            <person name="Brusic V."/>
            <person name="Quackenbush J."/>
            <person name="Wahlestedt C."/>
            <person name="Mattick J.S."/>
            <person name="Hume D.A."/>
            <person name="Kai C."/>
            <person name="Sasaki D."/>
            <person name="Tomaru Y."/>
            <person name="Fukuda S."/>
            <person name="Kanamori-Katayama M."/>
            <person name="Suzuki M."/>
            <person name="Aoki J."/>
            <person name="Arakawa T."/>
            <person name="Iida J."/>
            <person name="Imamura K."/>
            <person name="Itoh M."/>
            <person name="Kato T."/>
            <person name="Kawaji H."/>
            <person name="Kawagashira N."/>
            <person name="Kawashima T."/>
            <person name="Kojima M."/>
            <person name="Kondo S."/>
            <person name="Konno H."/>
            <person name="Nakano K."/>
            <person name="Ninomiya N."/>
            <person name="Nishio T."/>
            <person name="Okada M."/>
            <person name="Plessy C."/>
            <person name="Shibata K."/>
            <person name="Shiraki T."/>
            <person name="Suzuki S."/>
            <person name="Tagami M."/>
            <person name="Waki K."/>
            <person name="Watahiki A."/>
            <person name="Okamura-Oho Y."/>
            <person name="Suzuki H."/>
            <person name="Kawai J."/>
            <person name="Hayashizaki Y."/>
        </authorList>
    </citation>
    <scope>NUCLEOTIDE SEQUENCE [LARGE SCALE MRNA]</scope>
    <source>
        <strain>C57BL/6J</strain>
        <tissue>Embryo</tissue>
        <tissue>Stomach</tissue>
    </source>
</reference>
<reference key="4">
    <citation type="journal article" date="2004" name="Genome Res.">
        <title>The status, quality, and expansion of the NIH full-length cDNA project: the Mammalian Gene Collection (MGC).</title>
        <authorList>
            <consortium name="The MGC Project Team"/>
        </authorList>
    </citation>
    <scope>NUCLEOTIDE SEQUENCE [LARGE SCALE MRNA]</scope>
</reference>
<reference key="5">
    <citation type="thesis" date="2001" institute="University of Goettingen" country="Germany">
        <authorList>
            <person name="Schmidt T."/>
        </authorList>
    </citation>
    <scope>NUCLEOTIDE SEQUENCE [MRNA] OF 38-332</scope>
    <source>
        <tissue>Embryo</tissue>
    </source>
</reference>
<reference key="6">
    <citation type="journal article" date="2010" name="Cell">
        <title>A tissue-specific atlas of mouse protein phosphorylation and expression.</title>
        <authorList>
            <person name="Huttlin E.L."/>
            <person name="Jedrychowski M.P."/>
            <person name="Elias J.E."/>
            <person name="Goswami T."/>
            <person name="Rad R."/>
            <person name="Beausoleil S.A."/>
            <person name="Villen J."/>
            <person name="Haas W."/>
            <person name="Sowa M.E."/>
            <person name="Gygi S.P."/>
        </authorList>
    </citation>
    <scope>PHOSPHORYLATION [LARGE SCALE ANALYSIS] AT SER-233; SER-269; SER-274 AND SER-277</scope>
    <scope>IDENTIFICATION BY MASS SPECTROMETRY [LARGE SCALE ANALYSIS]</scope>
    <source>
        <tissue>Kidney</tissue>
        <tissue>Spleen</tissue>
        <tissue>Testis</tissue>
    </source>
</reference>
<keyword id="KW-0137">Centromere</keyword>
<keyword id="KW-0158">Chromosome</keyword>
<keyword id="KW-0995">Kinetochore</keyword>
<keyword id="KW-0539">Nucleus</keyword>
<keyword id="KW-0597">Phosphoprotein</keyword>
<keyword id="KW-1185">Reference proteome</keyword>
<keyword id="KW-0779">Telomere</keyword>
<keyword id="KW-0043">Tumor suppressor</keyword>
<comment type="function">
    <text evidence="1">Microtubule-binding protein essential for faithful chromosome segregation. Mediates TRF1 and TERT accumulation in nucleolus and enhances TRF1 binding to telomeres. Inhibits telomerase activity. May inhibit cell proliferation and act as tumor suppressor (By similarity).</text>
</comment>
<comment type="subunit">
    <text evidence="1">Interacts with MCRS1, TERT, TERF1, NCL/nucleolin, and the telomerase RNA.</text>
</comment>
<comment type="subcellular location">
    <subcellularLocation>
        <location evidence="1">Nucleus</location>
    </subcellularLocation>
    <subcellularLocation>
        <location evidence="1">Nucleus</location>
        <location evidence="1">Nucleolus</location>
    </subcellularLocation>
    <subcellularLocation>
        <location evidence="1">Chromosome</location>
        <location evidence="1">Telomere</location>
    </subcellularLocation>
    <subcellularLocation>
        <location evidence="1">Chromosome</location>
        <location evidence="1">Centromere</location>
        <location evidence="1">Kinetochore</location>
    </subcellularLocation>
    <text evidence="1">Localizes in nucleoli, at telomere speckles and to the outer plate of kinetochores. Localization to the kinetochore is mediated by its central region and depends on NDC80 and CENPE (By similarity).</text>
</comment>
<comment type="domain">
    <text evidence="1">The TID (telomerase inhibiting domain) domain is sufficient to bind TERT and inhibits its activity.</text>
</comment>
<comment type="domain">
    <text evidence="1">The TBM domain mediates interaction with TERF1.</text>
</comment>
<comment type="similarity">
    <text evidence="4">Belongs to the PINX1 family.</text>
</comment>